<evidence type="ECO:0000255" key="1">
    <source>
        <dbReference type="HAMAP-Rule" id="MF_01342"/>
    </source>
</evidence>
<evidence type="ECO:0000305" key="2"/>
<gene>
    <name evidence="1" type="primary">rplP</name>
    <name type="ordered locus">BR1226</name>
    <name type="ordered locus">BS1330_I1222</name>
</gene>
<comment type="function">
    <text evidence="1">Binds 23S rRNA and is also seen to make contacts with the A and possibly P site tRNAs.</text>
</comment>
<comment type="subunit">
    <text evidence="1">Part of the 50S ribosomal subunit.</text>
</comment>
<comment type="similarity">
    <text evidence="1">Belongs to the universal ribosomal protein uL16 family.</text>
</comment>
<feature type="chain" id="PRO_0000062063" description="Large ribosomal subunit protein uL16">
    <location>
        <begin position="1"/>
        <end position="137"/>
    </location>
</feature>
<sequence>MMQPKRTKFRKQFKGRIHGNSKGGTDLNFGAFGLKALEPERVTARQIEAARRAITRHMKRAGRVWIRIFPDLPVTSKPTEVRMGKGKGSVDYWACRVAPGRVMFELDGVPEDVAREALRLGAAKLPIKTRFIQRIAE</sequence>
<organism>
    <name type="scientific">Brucella suis biovar 1 (strain 1330)</name>
    <dbReference type="NCBI Taxonomy" id="204722"/>
    <lineage>
        <taxon>Bacteria</taxon>
        <taxon>Pseudomonadati</taxon>
        <taxon>Pseudomonadota</taxon>
        <taxon>Alphaproteobacteria</taxon>
        <taxon>Hyphomicrobiales</taxon>
        <taxon>Brucellaceae</taxon>
        <taxon>Brucella/Ochrobactrum group</taxon>
        <taxon>Brucella</taxon>
    </lineage>
</organism>
<name>RL16_BRUSU</name>
<proteinExistence type="inferred from homology"/>
<reference key="1">
    <citation type="journal article" date="2002" name="Proc. Natl. Acad. Sci. U.S.A.">
        <title>The Brucella suis genome reveals fundamental similarities between animal and plant pathogens and symbionts.</title>
        <authorList>
            <person name="Paulsen I.T."/>
            <person name="Seshadri R."/>
            <person name="Nelson K.E."/>
            <person name="Eisen J.A."/>
            <person name="Heidelberg J.F."/>
            <person name="Read T.D."/>
            <person name="Dodson R.J."/>
            <person name="Umayam L.A."/>
            <person name="Brinkac L.M."/>
            <person name="Beanan M.J."/>
            <person name="Daugherty S.C."/>
            <person name="DeBoy R.T."/>
            <person name="Durkin A.S."/>
            <person name="Kolonay J.F."/>
            <person name="Madupu R."/>
            <person name="Nelson W.C."/>
            <person name="Ayodeji B."/>
            <person name="Kraul M."/>
            <person name="Shetty J."/>
            <person name="Malek J.A."/>
            <person name="Van Aken S.E."/>
            <person name="Riedmuller S."/>
            <person name="Tettelin H."/>
            <person name="Gill S.R."/>
            <person name="White O."/>
            <person name="Salzberg S.L."/>
            <person name="Hoover D.L."/>
            <person name="Lindler L.E."/>
            <person name="Halling S.M."/>
            <person name="Boyle S.M."/>
            <person name="Fraser C.M."/>
        </authorList>
    </citation>
    <scope>NUCLEOTIDE SEQUENCE [LARGE SCALE GENOMIC DNA]</scope>
    <source>
        <strain>1330</strain>
    </source>
</reference>
<reference key="2">
    <citation type="journal article" date="2011" name="J. Bacteriol.">
        <title>Revised genome sequence of Brucella suis 1330.</title>
        <authorList>
            <person name="Tae H."/>
            <person name="Shallom S."/>
            <person name="Settlage R."/>
            <person name="Preston D."/>
            <person name="Adams L.G."/>
            <person name="Garner H.R."/>
        </authorList>
    </citation>
    <scope>NUCLEOTIDE SEQUENCE [LARGE SCALE GENOMIC DNA]</scope>
    <source>
        <strain>1330</strain>
    </source>
</reference>
<accession>Q8G081</accession>
<accession>G0KAE7</accession>
<protein>
    <recommendedName>
        <fullName evidence="1">Large ribosomal subunit protein uL16</fullName>
    </recommendedName>
    <alternativeName>
        <fullName evidence="2">50S ribosomal protein L16</fullName>
    </alternativeName>
</protein>
<dbReference type="EMBL" id="AE014291">
    <property type="protein sequence ID" value="AAN30145.1"/>
    <property type="molecule type" value="Genomic_DNA"/>
</dbReference>
<dbReference type="EMBL" id="CP002997">
    <property type="protein sequence ID" value="AEM18563.1"/>
    <property type="molecule type" value="Genomic_DNA"/>
</dbReference>
<dbReference type="PIR" id="AF3347">
    <property type="entry name" value="AF3347"/>
</dbReference>
<dbReference type="RefSeq" id="WP_002964355.1">
    <property type="nucleotide sequence ID" value="NZ_KN046804.1"/>
</dbReference>
<dbReference type="SMR" id="Q8G081"/>
<dbReference type="GeneID" id="97533531"/>
<dbReference type="KEGG" id="bms:BR1226"/>
<dbReference type="KEGG" id="bsi:BS1330_I1222"/>
<dbReference type="PATRIC" id="fig|204722.21.peg.2250"/>
<dbReference type="HOGENOM" id="CLU_078858_2_1_5"/>
<dbReference type="PhylomeDB" id="Q8G081"/>
<dbReference type="Proteomes" id="UP000007104">
    <property type="component" value="Chromosome I"/>
</dbReference>
<dbReference type="GO" id="GO:0022625">
    <property type="term" value="C:cytosolic large ribosomal subunit"/>
    <property type="evidence" value="ECO:0007669"/>
    <property type="project" value="TreeGrafter"/>
</dbReference>
<dbReference type="GO" id="GO:0019843">
    <property type="term" value="F:rRNA binding"/>
    <property type="evidence" value="ECO:0007669"/>
    <property type="project" value="UniProtKB-UniRule"/>
</dbReference>
<dbReference type="GO" id="GO:0003735">
    <property type="term" value="F:structural constituent of ribosome"/>
    <property type="evidence" value="ECO:0007669"/>
    <property type="project" value="InterPro"/>
</dbReference>
<dbReference type="GO" id="GO:0000049">
    <property type="term" value="F:tRNA binding"/>
    <property type="evidence" value="ECO:0007669"/>
    <property type="project" value="UniProtKB-KW"/>
</dbReference>
<dbReference type="GO" id="GO:0006412">
    <property type="term" value="P:translation"/>
    <property type="evidence" value="ECO:0007669"/>
    <property type="project" value="UniProtKB-UniRule"/>
</dbReference>
<dbReference type="CDD" id="cd01433">
    <property type="entry name" value="Ribosomal_L16_L10e"/>
    <property type="match status" value="1"/>
</dbReference>
<dbReference type="FunFam" id="3.90.1170.10:FF:000001">
    <property type="entry name" value="50S ribosomal protein L16"/>
    <property type="match status" value="1"/>
</dbReference>
<dbReference type="Gene3D" id="3.90.1170.10">
    <property type="entry name" value="Ribosomal protein L10e/L16"/>
    <property type="match status" value="1"/>
</dbReference>
<dbReference type="HAMAP" id="MF_01342">
    <property type="entry name" value="Ribosomal_uL16"/>
    <property type="match status" value="1"/>
</dbReference>
<dbReference type="InterPro" id="IPR047873">
    <property type="entry name" value="Ribosomal_uL16"/>
</dbReference>
<dbReference type="InterPro" id="IPR000114">
    <property type="entry name" value="Ribosomal_uL16_bact-type"/>
</dbReference>
<dbReference type="InterPro" id="IPR020798">
    <property type="entry name" value="Ribosomal_uL16_CS"/>
</dbReference>
<dbReference type="InterPro" id="IPR016180">
    <property type="entry name" value="Ribosomal_uL16_dom"/>
</dbReference>
<dbReference type="InterPro" id="IPR036920">
    <property type="entry name" value="Ribosomal_uL16_sf"/>
</dbReference>
<dbReference type="NCBIfam" id="TIGR01164">
    <property type="entry name" value="rplP_bact"/>
    <property type="match status" value="1"/>
</dbReference>
<dbReference type="PANTHER" id="PTHR12220">
    <property type="entry name" value="50S/60S RIBOSOMAL PROTEIN L16"/>
    <property type="match status" value="1"/>
</dbReference>
<dbReference type="PANTHER" id="PTHR12220:SF13">
    <property type="entry name" value="LARGE RIBOSOMAL SUBUNIT PROTEIN UL16M"/>
    <property type="match status" value="1"/>
</dbReference>
<dbReference type="Pfam" id="PF00252">
    <property type="entry name" value="Ribosomal_L16"/>
    <property type="match status" value="1"/>
</dbReference>
<dbReference type="PRINTS" id="PR00060">
    <property type="entry name" value="RIBOSOMALL16"/>
</dbReference>
<dbReference type="SUPFAM" id="SSF54686">
    <property type="entry name" value="Ribosomal protein L16p/L10e"/>
    <property type="match status" value="1"/>
</dbReference>
<dbReference type="PROSITE" id="PS00586">
    <property type="entry name" value="RIBOSOMAL_L16_1"/>
    <property type="match status" value="1"/>
</dbReference>
<dbReference type="PROSITE" id="PS00701">
    <property type="entry name" value="RIBOSOMAL_L16_2"/>
    <property type="match status" value="1"/>
</dbReference>
<keyword id="KW-0687">Ribonucleoprotein</keyword>
<keyword id="KW-0689">Ribosomal protein</keyword>
<keyword id="KW-0694">RNA-binding</keyword>
<keyword id="KW-0699">rRNA-binding</keyword>
<keyword id="KW-0820">tRNA-binding</keyword>